<proteinExistence type="inferred from homology"/>
<dbReference type="EMBL" id="CP000562">
    <property type="protein sequence ID" value="ABN58366.1"/>
    <property type="molecule type" value="Genomic_DNA"/>
</dbReference>
<dbReference type="RefSeq" id="WP_011845275.1">
    <property type="nucleotide sequence ID" value="NC_009051.1"/>
</dbReference>
<dbReference type="SMR" id="A3CYB6"/>
<dbReference type="STRING" id="368407.Memar_2445"/>
<dbReference type="GeneID" id="4847243"/>
<dbReference type="KEGG" id="mem:Memar_2445"/>
<dbReference type="eggNOG" id="arCOG01988">
    <property type="taxonomic scope" value="Archaea"/>
</dbReference>
<dbReference type="HOGENOM" id="CLU_165896_0_0_2"/>
<dbReference type="OrthoDB" id="84643at2157"/>
<dbReference type="Proteomes" id="UP000002146">
    <property type="component" value="Chromosome"/>
</dbReference>
<dbReference type="GO" id="GO:0003746">
    <property type="term" value="F:translation elongation factor activity"/>
    <property type="evidence" value="ECO:0007669"/>
    <property type="project" value="UniProtKB-UniRule"/>
</dbReference>
<dbReference type="CDD" id="cd00292">
    <property type="entry name" value="EF1B"/>
    <property type="match status" value="1"/>
</dbReference>
<dbReference type="Gene3D" id="3.30.70.60">
    <property type="match status" value="1"/>
</dbReference>
<dbReference type="HAMAP" id="MF_00043">
    <property type="entry name" value="EF1_beta"/>
    <property type="match status" value="1"/>
</dbReference>
<dbReference type="InterPro" id="IPR036219">
    <property type="entry name" value="eEF-1beta-like_sf"/>
</dbReference>
<dbReference type="InterPro" id="IPR014038">
    <property type="entry name" value="EF1B_bsu/dsu_GNE"/>
</dbReference>
<dbReference type="InterPro" id="IPR014717">
    <property type="entry name" value="Transl_elong_EF1B/ribsomal_bS6"/>
</dbReference>
<dbReference type="InterPro" id="IPR004542">
    <property type="entry name" value="Transl_elong_EF1B_B_arc"/>
</dbReference>
<dbReference type="NCBIfam" id="TIGR00489">
    <property type="entry name" value="aEF-1_beta"/>
    <property type="match status" value="1"/>
</dbReference>
<dbReference type="NCBIfam" id="NF001670">
    <property type="entry name" value="PRK00435.1"/>
    <property type="match status" value="1"/>
</dbReference>
<dbReference type="PANTHER" id="PTHR39647">
    <property type="entry name" value="ELONGATION FACTOR 1-BETA"/>
    <property type="match status" value="1"/>
</dbReference>
<dbReference type="PANTHER" id="PTHR39647:SF1">
    <property type="entry name" value="ELONGATION FACTOR 1-BETA"/>
    <property type="match status" value="1"/>
</dbReference>
<dbReference type="Pfam" id="PF00736">
    <property type="entry name" value="EF1_GNE"/>
    <property type="match status" value="1"/>
</dbReference>
<dbReference type="PIRSF" id="PIRSF006521">
    <property type="entry name" value="Transl_elong_EF1B_B_arc"/>
    <property type="match status" value="1"/>
</dbReference>
<dbReference type="SMART" id="SM00888">
    <property type="entry name" value="EF1_GNE"/>
    <property type="match status" value="1"/>
</dbReference>
<dbReference type="SUPFAM" id="SSF54984">
    <property type="entry name" value="eEF-1beta-like"/>
    <property type="match status" value="1"/>
</dbReference>
<evidence type="ECO:0000255" key="1">
    <source>
        <dbReference type="HAMAP-Rule" id="MF_00043"/>
    </source>
</evidence>
<accession>A3CYB6</accession>
<comment type="function">
    <text evidence="1">Promotes the exchange of GDP for GTP in EF-1-alpha/GDP, thus allowing the regeneration of EF-1-alpha/GTP that could then be used to form the ternary complex EF-1-alpha/GTP/AAtRNA.</text>
</comment>
<comment type="similarity">
    <text evidence="1">Belongs to the EF-1-beta/EF-1-delta family.</text>
</comment>
<organism>
    <name type="scientific">Methanoculleus marisnigri (strain ATCC 35101 / DSM 1498 / JR1)</name>
    <dbReference type="NCBI Taxonomy" id="368407"/>
    <lineage>
        <taxon>Archaea</taxon>
        <taxon>Methanobacteriati</taxon>
        <taxon>Methanobacteriota</taxon>
        <taxon>Stenosarchaea group</taxon>
        <taxon>Methanomicrobia</taxon>
        <taxon>Methanomicrobiales</taxon>
        <taxon>Methanomicrobiaceae</taxon>
        <taxon>Methanoculleus</taxon>
    </lineage>
</organism>
<feature type="chain" id="PRO_0000366432" description="Elongation factor 1-beta">
    <location>
        <begin position="1"/>
        <end position="84"/>
    </location>
</feature>
<reference key="1">
    <citation type="journal article" date="2009" name="Stand. Genomic Sci.">
        <title>Complete genome sequence of Methanoculleus marisnigri Romesser et al. 1981 type strain JR1.</title>
        <authorList>
            <person name="Anderson I.J."/>
            <person name="Sieprawska-Lupa M."/>
            <person name="Lapidus A."/>
            <person name="Nolan M."/>
            <person name="Copeland A."/>
            <person name="Glavina Del Rio T."/>
            <person name="Tice H."/>
            <person name="Dalin E."/>
            <person name="Barry K."/>
            <person name="Saunders E."/>
            <person name="Han C."/>
            <person name="Brettin T."/>
            <person name="Detter J.C."/>
            <person name="Bruce D."/>
            <person name="Mikhailova N."/>
            <person name="Pitluck S."/>
            <person name="Hauser L."/>
            <person name="Land M."/>
            <person name="Lucas S."/>
            <person name="Richardson P."/>
            <person name="Whitman W.B."/>
            <person name="Kyrpides N.C."/>
        </authorList>
    </citation>
    <scope>NUCLEOTIDE SEQUENCE [LARGE SCALE GENOMIC DNA]</scope>
    <source>
        <strain>ATCC 35101 / DSM 1498 / JR1</strain>
    </source>
</reference>
<gene>
    <name evidence="1" type="primary">ef1b</name>
    <name type="ordered locus">Memar_2445</name>
</gene>
<name>EF1B_METMJ</name>
<sequence>MGNVAIIVKIMPESPEVDREALKAAVRAAVPVDDIQEEPIGFGLVALKAAVVVPDKAGAPDEVEAALQKIEGVASAEIVESTLV</sequence>
<keyword id="KW-0251">Elongation factor</keyword>
<keyword id="KW-0648">Protein biosynthesis</keyword>
<protein>
    <recommendedName>
        <fullName evidence="1">Elongation factor 1-beta</fullName>
        <shortName evidence="1">EF-1-beta</shortName>
    </recommendedName>
    <alternativeName>
        <fullName evidence="1">aEF-1beta</fullName>
    </alternativeName>
</protein>